<evidence type="ECO:0000255" key="1">
    <source>
        <dbReference type="HAMAP-Rule" id="MF_01384"/>
    </source>
</evidence>
<organism>
    <name type="scientific">Staphylococcus aureus (strain Newman)</name>
    <dbReference type="NCBI Taxonomy" id="426430"/>
    <lineage>
        <taxon>Bacteria</taxon>
        <taxon>Bacillati</taxon>
        <taxon>Bacillota</taxon>
        <taxon>Bacilli</taxon>
        <taxon>Bacillales</taxon>
        <taxon>Staphylococcaceae</taxon>
        <taxon>Staphylococcus</taxon>
    </lineage>
</organism>
<dbReference type="EMBL" id="AP009351">
    <property type="protein sequence ID" value="BAF68466.1"/>
    <property type="molecule type" value="Genomic_DNA"/>
</dbReference>
<dbReference type="RefSeq" id="WP_000344352.1">
    <property type="nucleotide sequence ID" value="NZ_JBBIAE010000006.1"/>
</dbReference>
<dbReference type="SMR" id="A6QJD4"/>
<dbReference type="KEGG" id="sae:NWMN_2194"/>
<dbReference type="HOGENOM" id="CLU_056339_5_0_9"/>
<dbReference type="Proteomes" id="UP000006386">
    <property type="component" value="Chromosome"/>
</dbReference>
<dbReference type="GO" id="GO:0005737">
    <property type="term" value="C:cytoplasm"/>
    <property type="evidence" value="ECO:0007669"/>
    <property type="project" value="UniProtKB-SubCell"/>
</dbReference>
<dbReference type="GO" id="GO:0016151">
    <property type="term" value="F:nickel cation binding"/>
    <property type="evidence" value="ECO:0007669"/>
    <property type="project" value="UniProtKB-UniRule"/>
</dbReference>
<dbReference type="HAMAP" id="MF_01384">
    <property type="entry name" value="UreD"/>
    <property type="match status" value="1"/>
</dbReference>
<dbReference type="InterPro" id="IPR002669">
    <property type="entry name" value="UreD"/>
</dbReference>
<dbReference type="PANTHER" id="PTHR33643">
    <property type="entry name" value="UREASE ACCESSORY PROTEIN D"/>
    <property type="match status" value="1"/>
</dbReference>
<dbReference type="PANTHER" id="PTHR33643:SF1">
    <property type="entry name" value="UREASE ACCESSORY PROTEIN D"/>
    <property type="match status" value="1"/>
</dbReference>
<dbReference type="Pfam" id="PF01774">
    <property type="entry name" value="UreD"/>
    <property type="match status" value="1"/>
</dbReference>
<proteinExistence type="inferred from homology"/>
<gene>
    <name evidence="1" type="primary">ureD</name>
    <name type="ordered locus">NWMN_2194</name>
</gene>
<comment type="function">
    <text evidence="1">Required for maturation of urease via the functional incorporation of the urease nickel metallocenter.</text>
</comment>
<comment type="subunit">
    <text evidence="1">UreD, UreF and UreG form a complex that acts as a GTP-hydrolysis-dependent molecular chaperone, activating the urease apoprotein by helping to assemble the nickel containing metallocenter of UreC. The UreE protein probably delivers the nickel.</text>
</comment>
<comment type="subcellular location">
    <subcellularLocation>
        <location evidence="1">Cytoplasm</location>
    </subcellularLocation>
</comment>
<comment type="similarity">
    <text evidence="1">Belongs to the UreD family.</text>
</comment>
<name>URED_STAAE</name>
<feature type="chain" id="PRO_0000346601" description="Urease accessory protein UreD">
    <location>
        <begin position="1"/>
        <end position="278"/>
    </location>
</feature>
<protein>
    <recommendedName>
        <fullName evidence="1">Urease accessory protein UreD</fullName>
    </recommendedName>
</protein>
<sequence>MDEQQWTGQLDLTVFFDGNRSVSRDIFFEKALKVIRPVYLNQSTIPTFYIVNVGGGYLDGDRYRMNVNVEDNAKVTLTSQGATKIYKTPSNHVEQYQTFNLKDNAYLEYVADPIIAYENAKFYQHNTFNLNNSSSLFYTDILTPGYSKTGEAFKYQYMHLINEIYIEDELVTYDNLLLNPNKQSINEIGYMEHYSHYGSAYFIHEDVNQKLIDSVYETISSYSNTFDCRVAISQLPTHGFAVRIFAYRTQIIEKILGTIQSYIAENIYDRKLDFLRKY</sequence>
<keyword id="KW-0143">Chaperone</keyword>
<keyword id="KW-0963">Cytoplasm</keyword>
<keyword id="KW-0996">Nickel insertion</keyword>
<reference key="1">
    <citation type="journal article" date="2008" name="J. Bacteriol.">
        <title>Genome sequence of Staphylococcus aureus strain Newman and comparative analysis of staphylococcal genomes: polymorphism and evolution of two major pathogenicity islands.</title>
        <authorList>
            <person name="Baba T."/>
            <person name="Bae T."/>
            <person name="Schneewind O."/>
            <person name="Takeuchi F."/>
            <person name="Hiramatsu K."/>
        </authorList>
    </citation>
    <scope>NUCLEOTIDE SEQUENCE [LARGE SCALE GENOMIC DNA]</scope>
    <source>
        <strain>Newman</strain>
    </source>
</reference>
<accession>A6QJD4</accession>